<protein>
    <recommendedName>
        <fullName>Cytokine-like protein 1</fullName>
    </recommendedName>
    <alternativeName>
        <fullName>Protein C17</fullName>
    </alternativeName>
</protein>
<comment type="subcellular location">
    <subcellularLocation>
        <location evidence="1">Secreted</location>
    </subcellularLocation>
</comment>
<comment type="tissue specificity">
    <text evidence="1">Specifically expressed in CD34+ hematopoietic cells.</text>
</comment>
<evidence type="ECO:0000269" key="1">
    <source>
    </source>
</evidence>
<evidence type="ECO:0000269" key="2">
    <source>
    </source>
</evidence>
<accession>Q9NRR1</accession>
<name>CYTL1_HUMAN</name>
<proteinExistence type="evidence at protein level"/>
<dbReference type="EMBL" id="AF193766">
    <property type="protein sequence ID" value="AAF73372.1"/>
    <property type="molecule type" value="mRNA"/>
</dbReference>
<dbReference type="EMBL" id="AY359101">
    <property type="protein sequence ID" value="AAQ89459.1"/>
    <property type="molecule type" value="mRNA"/>
</dbReference>
<dbReference type="EMBL" id="BC031391">
    <property type="protein sequence ID" value="AAH31391.1"/>
    <property type="molecule type" value="mRNA"/>
</dbReference>
<dbReference type="CCDS" id="CCDS3379.1"/>
<dbReference type="RefSeq" id="NP_061129.1">
    <property type="nucleotide sequence ID" value="NM_018659.3"/>
</dbReference>
<dbReference type="BioGRID" id="119938">
    <property type="interactions" value="1"/>
</dbReference>
<dbReference type="FunCoup" id="Q9NRR1">
    <property type="interactions" value="243"/>
</dbReference>
<dbReference type="STRING" id="9606.ENSP00000303550"/>
<dbReference type="GlyGen" id="Q9NRR1">
    <property type="glycosylation" value="1 site"/>
</dbReference>
<dbReference type="iPTMnet" id="Q9NRR1"/>
<dbReference type="PhosphoSitePlus" id="Q9NRR1"/>
<dbReference type="BioMuta" id="CYTL1"/>
<dbReference type="MassIVE" id="Q9NRR1"/>
<dbReference type="PaxDb" id="9606-ENSP00000303550"/>
<dbReference type="PeptideAtlas" id="Q9NRR1"/>
<dbReference type="ProteomicsDB" id="82406"/>
<dbReference type="Antibodypedia" id="22593">
    <property type="antibodies" value="94 antibodies from 22 providers"/>
</dbReference>
<dbReference type="DNASU" id="54360"/>
<dbReference type="Ensembl" id="ENST00000307746.9">
    <property type="protein sequence ID" value="ENSP00000303550.4"/>
    <property type="gene ID" value="ENSG00000170891.11"/>
</dbReference>
<dbReference type="GeneID" id="54360"/>
<dbReference type="KEGG" id="hsa:54360"/>
<dbReference type="MANE-Select" id="ENST00000307746.9">
    <property type="protein sequence ID" value="ENSP00000303550.4"/>
    <property type="RefSeq nucleotide sequence ID" value="NM_018659.3"/>
    <property type="RefSeq protein sequence ID" value="NP_061129.1"/>
</dbReference>
<dbReference type="UCSC" id="uc003gig.5">
    <property type="organism name" value="human"/>
</dbReference>
<dbReference type="AGR" id="HGNC:24435"/>
<dbReference type="CTD" id="54360"/>
<dbReference type="DisGeNET" id="54360"/>
<dbReference type="GeneCards" id="CYTL1"/>
<dbReference type="HGNC" id="HGNC:24435">
    <property type="gene designation" value="CYTL1"/>
</dbReference>
<dbReference type="HPA" id="ENSG00000170891">
    <property type="expression patterns" value="Tissue enhanced (placenta)"/>
</dbReference>
<dbReference type="MIM" id="607930">
    <property type="type" value="gene"/>
</dbReference>
<dbReference type="neXtProt" id="NX_Q9NRR1"/>
<dbReference type="OpenTargets" id="ENSG00000170891"/>
<dbReference type="PharmGKB" id="PA134978681"/>
<dbReference type="VEuPathDB" id="HostDB:ENSG00000170891"/>
<dbReference type="eggNOG" id="ENOG502S2F0">
    <property type="taxonomic scope" value="Eukaryota"/>
</dbReference>
<dbReference type="GeneTree" id="ENSGT00390000016221"/>
<dbReference type="HOGENOM" id="CLU_138622_1_0_1"/>
<dbReference type="InParanoid" id="Q9NRR1"/>
<dbReference type="OMA" id="CYSRMLT"/>
<dbReference type="OrthoDB" id="9899179at2759"/>
<dbReference type="PAN-GO" id="Q9NRR1">
    <property type="GO annotations" value="1 GO annotation based on evolutionary models"/>
</dbReference>
<dbReference type="PhylomeDB" id="Q9NRR1"/>
<dbReference type="TreeFam" id="TF333406"/>
<dbReference type="PathwayCommons" id="Q9NRR1"/>
<dbReference type="SignaLink" id="Q9NRR1"/>
<dbReference type="BioGRID-ORCS" id="54360">
    <property type="hits" value="12 hits in 1141 CRISPR screens"/>
</dbReference>
<dbReference type="ChiTaRS" id="CYTL1">
    <property type="organism name" value="human"/>
</dbReference>
<dbReference type="GenomeRNAi" id="54360"/>
<dbReference type="Pharos" id="Q9NRR1">
    <property type="development level" value="Tbio"/>
</dbReference>
<dbReference type="PRO" id="PR:Q9NRR1"/>
<dbReference type="Proteomes" id="UP000005640">
    <property type="component" value="Chromosome 4"/>
</dbReference>
<dbReference type="RNAct" id="Q9NRR1">
    <property type="molecule type" value="protein"/>
</dbReference>
<dbReference type="Bgee" id="ENSG00000170891">
    <property type="expression patterns" value="Expressed in tibia and 111 other cell types or tissues"/>
</dbReference>
<dbReference type="ExpressionAtlas" id="Q9NRR1">
    <property type="expression patterns" value="baseline and differential"/>
</dbReference>
<dbReference type="GO" id="GO:0005615">
    <property type="term" value="C:extracellular space"/>
    <property type="evidence" value="ECO:0000304"/>
    <property type="project" value="ProtInc"/>
</dbReference>
<dbReference type="GO" id="GO:0005102">
    <property type="term" value="F:signaling receptor binding"/>
    <property type="evidence" value="ECO:0000304"/>
    <property type="project" value="ProtInc"/>
</dbReference>
<dbReference type="GO" id="GO:1990079">
    <property type="term" value="P:cartilage homeostasis"/>
    <property type="evidence" value="ECO:0007669"/>
    <property type="project" value="Ensembl"/>
</dbReference>
<dbReference type="GO" id="GO:0002062">
    <property type="term" value="P:chondrocyte differentiation"/>
    <property type="evidence" value="ECO:0007669"/>
    <property type="project" value="Ensembl"/>
</dbReference>
<dbReference type="GO" id="GO:0050650">
    <property type="term" value="P:chondroitin sulfate proteoglycan biosynthetic process"/>
    <property type="evidence" value="ECO:0007669"/>
    <property type="project" value="Ensembl"/>
</dbReference>
<dbReference type="GO" id="GO:0048839">
    <property type="term" value="P:inner ear development"/>
    <property type="evidence" value="ECO:0007669"/>
    <property type="project" value="Ensembl"/>
</dbReference>
<dbReference type="GO" id="GO:0045944">
    <property type="term" value="P:positive regulation of transcription by RNA polymerase II"/>
    <property type="evidence" value="ECO:0000318"/>
    <property type="project" value="GO_Central"/>
</dbReference>
<dbReference type="GO" id="GO:0007165">
    <property type="term" value="P:signal transduction"/>
    <property type="evidence" value="ECO:0000304"/>
    <property type="project" value="ProtInc"/>
</dbReference>
<dbReference type="GO" id="GO:0006366">
    <property type="term" value="P:transcription by RNA polymerase II"/>
    <property type="evidence" value="ECO:0007669"/>
    <property type="project" value="Ensembl"/>
</dbReference>
<dbReference type="InterPro" id="IPR029253">
    <property type="entry name" value="CYTL1"/>
</dbReference>
<dbReference type="PANTHER" id="PTHR15974">
    <property type="entry name" value="CYTOKINE-LIKE PROTEIN 1"/>
    <property type="match status" value="1"/>
</dbReference>
<dbReference type="PANTHER" id="PTHR15974:SF0">
    <property type="entry name" value="CYTOKINE-LIKE PROTEIN 1"/>
    <property type="match status" value="1"/>
</dbReference>
<dbReference type="Pfam" id="PF15153">
    <property type="entry name" value="CYTL1"/>
    <property type="match status" value="1"/>
</dbReference>
<reference key="1">
    <citation type="journal article" date="2000" name="Genomics">
        <title>Molecular cloning and chromosomal mapping of a candidate cytokine gene selectively expressed in human CD34+ cells.</title>
        <authorList>
            <person name="Liu X."/>
            <person name="Rapp N."/>
            <person name="Deans R."/>
            <person name="Cheng L."/>
        </authorList>
    </citation>
    <scope>NUCLEOTIDE SEQUENCE [MRNA]</scope>
    <scope>TISSUE SPECIFICITY</scope>
    <scope>SUBCELLULAR LOCATION</scope>
    <source>
        <tissue>Blood</tissue>
    </source>
</reference>
<reference key="2">
    <citation type="journal article" date="2003" name="Genome Res.">
        <title>The secreted protein discovery initiative (SPDI), a large-scale effort to identify novel human secreted and transmembrane proteins: a bioinformatics assessment.</title>
        <authorList>
            <person name="Clark H.F."/>
            <person name="Gurney A.L."/>
            <person name="Abaya E."/>
            <person name="Baker K."/>
            <person name="Baldwin D.T."/>
            <person name="Brush J."/>
            <person name="Chen J."/>
            <person name="Chow B."/>
            <person name="Chui C."/>
            <person name="Crowley C."/>
            <person name="Currell B."/>
            <person name="Deuel B."/>
            <person name="Dowd P."/>
            <person name="Eaton D."/>
            <person name="Foster J.S."/>
            <person name="Grimaldi C."/>
            <person name="Gu Q."/>
            <person name="Hass P.E."/>
            <person name="Heldens S."/>
            <person name="Huang A."/>
            <person name="Kim H.S."/>
            <person name="Klimowski L."/>
            <person name="Jin Y."/>
            <person name="Johnson S."/>
            <person name="Lee J."/>
            <person name="Lewis L."/>
            <person name="Liao D."/>
            <person name="Mark M.R."/>
            <person name="Robbie E."/>
            <person name="Sanchez C."/>
            <person name="Schoenfeld J."/>
            <person name="Seshagiri S."/>
            <person name="Simmons L."/>
            <person name="Singh J."/>
            <person name="Smith V."/>
            <person name="Stinson J."/>
            <person name="Vagts A."/>
            <person name="Vandlen R.L."/>
            <person name="Watanabe C."/>
            <person name="Wieand D."/>
            <person name="Woods K."/>
            <person name="Xie M.-H."/>
            <person name="Yansura D.G."/>
            <person name="Yi S."/>
            <person name="Yu G."/>
            <person name="Yuan J."/>
            <person name="Zhang M."/>
            <person name="Zhang Z."/>
            <person name="Goddard A.D."/>
            <person name="Wood W.I."/>
            <person name="Godowski P.J."/>
            <person name="Gray A.M."/>
        </authorList>
    </citation>
    <scope>NUCLEOTIDE SEQUENCE [LARGE SCALE MRNA]</scope>
</reference>
<reference key="3">
    <citation type="journal article" date="2004" name="Genome Res.">
        <title>The status, quality, and expansion of the NIH full-length cDNA project: the Mammalian Gene Collection (MGC).</title>
        <authorList>
            <consortium name="The MGC Project Team"/>
        </authorList>
    </citation>
    <scope>NUCLEOTIDE SEQUENCE [LARGE SCALE MRNA]</scope>
    <source>
        <tissue>Colon</tissue>
    </source>
</reference>
<reference key="4">
    <citation type="journal article" date="2004" name="Protein Sci.">
        <title>Signal peptide prediction based on analysis of experimentally verified cleavage sites.</title>
        <authorList>
            <person name="Zhang Z."/>
            <person name="Henzel W.J."/>
        </authorList>
    </citation>
    <scope>PROTEIN SEQUENCE OF 23-37</scope>
</reference>
<keyword id="KW-0903">Direct protein sequencing</keyword>
<keyword id="KW-1267">Proteomics identification</keyword>
<keyword id="KW-1185">Reference proteome</keyword>
<keyword id="KW-0964">Secreted</keyword>
<keyword id="KW-0732">Signal</keyword>
<sequence>MRTPGPLPVLLLLLAGAPAARPTPPTCYSRMRALSQEITRDFNLLQVSEPSEPCVRYLPRLYLDIHNYCVLDKLRDFVASPPCWKVAQVDSLKDKARKLYTIMNSFCRRDLVFLLDDCNALEYPIPVTTVLPDRQR</sequence>
<feature type="signal peptide" evidence="2">
    <location>
        <begin position="1"/>
        <end position="22"/>
    </location>
</feature>
<feature type="chain" id="PRO_0000020838" description="Cytokine-like protein 1">
    <location>
        <begin position="23"/>
        <end position="136"/>
    </location>
</feature>
<feature type="sequence variant" id="VAR_050940" description="In dbSNP:rs35755546.">
    <original>S</original>
    <variation>L</variation>
    <location>
        <position position="51"/>
    </location>
</feature>
<feature type="sequence variant" id="VAR_050941" description="In dbSNP:rs11722554.">
    <original>R</original>
    <variation>C</variation>
    <location>
        <position position="136"/>
    </location>
</feature>
<gene>
    <name type="primary">CYTL1</name>
    <name type="synonym">C4orf4</name>
    <name type="ORF">UNQ1942/PRO4425</name>
</gene>
<organism>
    <name type="scientific">Homo sapiens</name>
    <name type="common">Human</name>
    <dbReference type="NCBI Taxonomy" id="9606"/>
    <lineage>
        <taxon>Eukaryota</taxon>
        <taxon>Metazoa</taxon>
        <taxon>Chordata</taxon>
        <taxon>Craniata</taxon>
        <taxon>Vertebrata</taxon>
        <taxon>Euteleostomi</taxon>
        <taxon>Mammalia</taxon>
        <taxon>Eutheria</taxon>
        <taxon>Euarchontoglires</taxon>
        <taxon>Primates</taxon>
        <taxon>Haplorrhini</taxon>
        <taxon>Catarrhini</taxon>
        <taxon>Hominidae</taxon>
        <taxon>Homo</taxon>
    </lineage>
</organism>